<gene>
    <name evidence="1" type="primary">rnfH</name>
    <name type="ordered locus">COXBURSA331_A1452</name>
</gene>
<name>RNFH_COXBR</name>
<sequence length="101" mass="11352">MISIIIAYATPEKQVEIPLTVEESCTLVVAVKRSGILQQFPEINLSQAIVGIHNKRTALDAGLRDDDRIEIYRPLTMDPKQARLLRAKRGKIRRMVRGEAG</sequence>
<accession>A9N8I3</accession>
<comment type="similarity">
    <text evidence="1">Belongs to the UPF0125 (RnfH) family.</text>
</comment>
<reference key="1">
    <citation type="submission" date="2007-11" db="EMBL/GenBank/DDBJ databases">
        <title>Genome sequencing of phylogenetically and phenotypically diverse Coxiella burnetii isolates.</title>
        <authorList>
            <person name="Seshadri R."/>
            <person name="Samuel J.E."/>
        </authorList>
    </citation>
    <scope>NUCLEOTIDE SEQUENCE [LARGE SCALE GENOMIC DNA]</scope>
    <source>
        <strain>RSA 331 / Henzerling II</strain>
    </source>
</reference>
<protein>
    <recommendedName>
        <fullName evidence="1">Protein RnfH</fullName>
    </recommendedName>
</protein>
<dbReference type="EMBL" id="CP000890">
    <property type="protein sequence ID" value="ABX77736.1"/>
    <property type="molecule type" value="Genomic_DNA"/>
</dbReference>
<dbReference type="RefSeq" id="WP_012220595.1">
    <property type="nucleotide sequence ID" value="NC_010117.1"/>
</dbReference>
<dbReference type="SMR" id="A9N8I3"/>
<dbReference type="KEGG" id="cbs:COXBURSA331_A1452"/>
<dbReference type="HOGENOM" id="CLU_150721_1_0_6"/>
<dbReference type="Gene3D" id="3.10.20.280">
    <property type="entry name" value="RnfH-like"/>
    <property type="match status" value="1"/>
</dbReference>
<dbReference type="HAMAP" id="MF_00460">
    <property type="entry name" value="UPF0125_RnfH"/>
    <property type="match status" value="1"/>
</dbReference>
<dbReference type="InterPro" id="IPR016155">
    <property type="entry name" value="Mopterin_synth/thiamin_S_b"/>
</dbReference>
<dbReference type="InterPro" id="IPR005346">
    <property type="entry name" value="RnfH"/>
</dbReference>
<dbReference type="InterPro" id="IPR037021">
    <property type="entry name" value="RnfH_sf"/>
</dbReference>
<dbReference type="NCBIfam" id="NF002490">
    <property type="entry name" value="PRK01777.1"/>
    <property type="match status" value="1"/>
</dbReference>
<dbReference type="PANTHER" id="PTHR37483">
    <property type="entry name" value="UPF0125 PROTEIN RATB"/>
    <property type="match status" value="1"/>
</dbReference>
<dbReference type="PANTHER" id="PTHR37483:SF1">
    <property type="entry name" value="UPF0125 PROTEIN RATB"/>
    <property type="match status" value="1"/>
</dbReference>
<dbReference type="Pfam" id="PF03658">
    <property type="entry name" value="Ub-RnfH"/>
    <property type="match status" value="1"/>
</dbReference>
<dbReference type="SUPFAM" id="SSF54285">
    <property type="entry name" value="MoaD/ThiS"/>
    <property type="match status" value="1"/>
</dbReference>
<organism>
    <name type="scientific">Coxiella burnetii (strain RSA 331 / Henzerling II)</name>
    <dbReference type="NCBI Taxonomy" id="360115"/>
    <lineage>
        <taxon>Bacteria</taxon>
        <taxon>Pseudomonadati</taxon>
        <taxon>Pseudomonadota</taxon>
        <taxon>Gammaproteobacteria</taxon>
        <taxon>Legionellales</taxon>
        <taxon>Coxiellaceae</taxon>
        <taxon>Coxiella</taxon>
    </lineage>
</organism>
<feature type="chain" id="PRO_1000081138" description="Protein RnfH">
    <location>
        <begin position="1"/>
        <end position="101"/>
    </location>
</feature>
<evidence type="ECO:0000255" key="1">
    <source>
        <dbReference type="HAMAP-Rule" id="MF_00460"/>
    </source>
</evidence>
<proteinExistence type="inferred from homology"/>